<comment type="function">
    <text evidence="1">Member of a network of 50S ribosomal subunit biogenesis factors which assembles along the 30S-50S interface, preventing incorrect 23S rRNA structures from forming. Promotes peptidyl transferase center (PTC) maturation.</text>
</comment>
<comment type="subcellular location">
    <subcellularLocation>
        <location evidence="1">Cytoplasm</location>
    </subcellularLocation>
    <text evidence="1">Associates with late stage pre-50S ribosomal subunits.</text>
</comment>
<comment type="similarity">
    <text evidence="1">Belongs to the DarP family.</text>
</comment>
<proteinExistence type="inferred from homology"/>
<evidence type="ECO:0000255" key="1">
    <source>
        <dbReference type="HAMAP-Rule" id="MF_00765"/>
    </source>
</evidence>
<organism>
    <name type="scientific">Pseudomonas paraeruginosa (strain DSM 24068 / PA7)</name>
    <name type="common">Pseudomonas aeruginosa (strain PA7)</name>
    <dbReference type="NCBI Taxonomy" id="381754"/>
    <lineage>
        <taxon>Bacteria</taxon>
        <taxon>Pseudomonadati</taxon>
        <taxon>Pseudomonadota</taxon>
        <taxon>Gammaproteobacteria</taxon>
        <taxon>Pseudomonadales</taxon>
        <taxon>Pseudomonadaceae</taxon>
        <taxon>Pseudomonas</taxon>
        <taxon>Pseudomonas paraeruginosa</taxon>
    </lineage>
</organism>
<gene>
    <name evidence="1" type="primary">darP</name>
    <name type="ordered locus">PSPA7_5087</name>
</gene>
<sequence>MAEFHDDDAQFEEKSKSQIKRELHALQDLGERLTTLQPQLLERLPLTDPLRKAVLDAPKHKAHIARKRHIQYIGKLMRDQDVDAIVALIEQVDTSTRQYNERFHALERWRDQLIAGGDAALDAFVGEFPDCDRQHLRSLVRHAQHEAAHNKPPAAARKVFKYIRELDETKRGLR</sequence>
<feature type="chain" id="PRO_1000062222" description="Dual-action ribosomal maturation protein DarP">
    <location>
        <begin position="1"/>
        <end position="174"/>
    </location>
</feature>
<keyword id="KW-0963">Cytoplasm</keyword>
<keyword id="KW-0690">Ribosome biogenesis</keyword>
<keyword id="KW-0694">RNA-binding</keyword>
<keyword id="KW-0699">rRNA-binding</keyword>
<accession>A6VBI8</accession>
<protein>
    <recommendedName>
        <fullName evidence="1">Dual-action ribosomal maturation protein DarP</fullName>
    </recommendedName>
    <alternativeName>
        <fullName evidence="1">Large ribosomal subunit assembly factor DarP</fullName>
    </alternativeName>
</protein>
<dbReference type="EMBL" id="CP000744">
    <property type="protein sequence ID" value="ABR86303.1"/>
    <property type="molecule type" value="Genomic_DNA"/>
</dbReference>
<dbReference type="RefSeq" id="WP_003156633.1">
    <property type="nucleotide sequence ID" value="NC_009656.1"/>
</dbReference>
<dbReference type="SMR" id="A6VBI8"/>
<dbReference type="KEGG" id="pap:PSPA7_5087"/>
<dbReference type="HOGENOM" id="CLU_106757_4_0_6"/>
<dbReference type="Proteomes" id="UP000001582">
    <property type="component" value="Chromosome"/>
</dbReference>
<dbReference type="GO" id="GO:0005829">
    <property type="term" value="C:cytosol"/>
    <property type="evidence" value="ECO:0007669"/>
    <property type="project" value="TreeGrafter"/>
</dbReference>
<dbReference type="GO" id="GO:0043022">
    <property type="term" value="F:ribosome binding"/>
    <property type="evidence" value="ECO:0007669"/>
    <property type="project" value="UniProtKB-UniRule"/>
</dbReference>
<dbReference type="GO" id="GO:0019843">
    <property type="term" value="F:rRNA binding"/>
    <property type="evidence" value="ECO:0007669"/>
    <property type="project" value="UniProtKB-UniRule"/>
</dbReference>
<dbReference type="GO" id="GO:1902626">
    <property type="term" value="P:assembly of large subunit precursor of preribosome"/>
    <property type="evidence" value="ECO:0007669"/>
    <property type="project" value="UniProtKB-UniRule"/>
</dbReference>
<dbReference type="CDD" id="cd16331">
    <property type="entry name" value="YjgA-like"/>
    <property type="match status" value="1"/>
</dbReference>
<dbReference type="FunFam" id="1.10.60.30:FF:000002">
    <property type="entry name" value="UPF0307 protein YjgA"/>
    <property type="match status" value="1"/>
</dbReference>
<dbReference type="Gene3D" id="1.10.60.30">
    <property type="entry name" value="PSPTO4464-like domains"/>
    <property type="match status" value="2"/>
</dbReference>
<dbReference type="HAMAP" id="MF_00765">
    <property type="entry name" value="DarP"/>
    <property type="match status" value="1"/>
</dbReference>
<dbReference type="InterPro" id="IPR006839">
    <property type="entry name" value="DarP"/>
</dbReference>
<dbReference type="InterPro" id="IPR023153">
    <property type="entry name" value="DarP_sf"/>
</dbReference>
<dbReference type="NCBIfam" id="NF003593">
    <property type="entry name" value="PRK05255.1-1"/>
    <property type="match status" value="1"/>
</dbReference>
<dbReference type="PANTHER" id="PTHR38101">
    <property type="entry name" value="UPF0307 PROTEIN YJGA"/>
    <property type="match status" value="1"/>
</dbReference>
<dbReference type="PANTHER" id="PTHR38101:SF1">
    <property type="entry name" value="UPF0307 PROTEIN YJGA"/>
    <property type="match status" value="1"/>
</dbReference>
<dbReference type="Pfam" id="PF04751">
    <property type="entry name" value="DarP"/>
    <property type="match status" value="1"/>
</dbReference>
<dbReference type="PIRSF" id="PIRSF016183">
    <property type="entry name" value="UCP016183"/>
    <property type="match status" value="1"/>
</dbReference>
<dbReference type="SUPFAM" id="SSF158710">
    <property type="entry name" value="PSPTO4464-like"/>
    <property type="match status" value="1"/>
</dbReference>
<reference key="1">
    <citation type="submission" date="2007-06" db="EMBL/GenBank/DDBJ databases">
        <authorList>
            <person name="Dodson R.J."/>
            <person name="Harkins D."/>
            <person name="Paulsen I.T."/>
        </authorList>
    </citation>
    <scope>NUCLEOTIDE SEQUENCE [LARGE SCALE GENOMIC DNA]</scope>
    <source>
        <strain>DSM 24068 / PA7</strain>
    </source>
</reference>
<name>DARP_PSEP7</name>